<comment type="function">
    <text evidence="1">Catalyzes the formation of 5-methyl-uridine at position 1939 (m5U1939) in 23S rRNA.</text>
</comment>
<comment type="catalytic activity">
    <reaction evidence="1">
        <text>uridine(1939) in 23S rRNA + S-adenosyl-L-methionine = 5-methyluridine(1939) in 23S rRNA + S-adenosyl-L-homocysteine + H(+)</text>
        <dbReference type="Rhea" id="RHEA:42908"/>
        <dbReference type="Rhea" id="RHEA-COMP:10278"/>
        <dbReference type="Rhea" id="RHEA-COMP:10279"/>
        <dbReference type="ChEBI" id="CHEBI:15378"/>
        <dbReference type="ChEBI" id="CHEBI:57856"/>
        <dbReference type="ChEBI" id="CHEBI:59789"/>
        <dbReference type="ChEBI" id="CHEBI:65315"/>
        <dbReference type="ChEBI" id="CHEBI:74447"/>
        <dbReference type="EC" id="2.1.1.190"/>
    </reaction>
</comment>
<comment type="similarity">
    <text evidence="1">Belongs to the class I-like SAM-binding methyltransferase superfamily. RNA M5U methyltransferase family. RlmD subfamily.</text>
</comment>
<organism>
    <name type="scientific">Chromohalobacter salexigens (strain ATCC BAA-138 / DSM 3043 / CIP 106854 / NCIMB 13768 / 1H11)</name>
    <dbReference type="NCBI Taxonomy" id="290398"/>
    <lineage>
        <taxon>Bacteria</taxon>
        <taxon>Pseudomonadati</taxon>
        <taxon>Pseudomonadota</taxon>
        <taxon>Gammaproteobacteria</taxon>
        <taxon>Oceanospirillales</taxon>
        <taxon>Halomonadaceae</taxon>
        <taxon>Chromohalobacter</taxon>
    </lineage>
</organism>
<sequence>MAMLGKRRPPRTANERVRRERGSATRRDDATADGLSIERLAHDGRGVARDPHGKTVFVDQALPGERVRVAVHRQRKRFDEAHVVERLATSPERATPPCAYYGRCGGCDLQHLDLEAQREHKRRTLDELFTRQGLTLPEIEVLAGEGLAYRRRARLGVKCDAEGTPHLGFRARGSEHLIDIDSCVVLEPVLSRLIAPLRACLVQLEAPRRVGHIELIATAEGACVVVRQLREVPGDEARWRRFAAEHDVTLAWRVGREAPTLRWLHAPRGEALHVTLVLDDTTLSLGCVPGDFLQINADVNARLVRTALAWLAPRGEERVLDLFAGVGNFTLALAPRVASITGIEGSPAMVERLADNARRAGLHQVGAQQSDLATQVPEVAAVDWVIMDPPRGGAEALCRALADSPVTTLLYVSCDPAALARDAARLVQGGYRIQRAALADMFPHTAHLESMLLLTRDTPRGRSTSVEREDHGQGP</sequence>
<protein>
    <recommendedName>
        <fullName evidence="1">23S rRNA (uracil(1939)-C(5))-methyltransferase RlmD</fullName>
        <ecNumber evidence="1">2.1.1.190</ecNumber>
    </recommendedName>
    <alternativeName>
        <fullName evidence="1">23S rRNA(m5U1939)-methyltransferase</fullName>
    </alternativeName>
</protein>
<keyword id="KW-0004">4Fe-4S</keyword>
<keyword id="KW-0408">Iron</keyword>
<keyword id="KW-0411">Iron-sulfur</keyword>
<keyword id="KW-0479">Metal-binding</keyword>
<keyword id="KW-0489">Methyltransferase</keyword>
<keyword id="KW-1185">Reference proteome</keyword>
<keyword id="KW-0698">rRNA processing</keyword>
<keyword id="KW-0949">S-adenosyl-L-methionine</keyword>
<keyword id="KW-0808">Transferase</keyword>
<evidence type="ECO:0000255" key="1">
    <source>
        <dbReference type="HAMAP-Rule" id="MF_01010"/>
    </source>
</evidence>
<evidence type="ECO:0000256" key="2">
    <source>
        <dbReference type="SAM" id="MobiDB-lite"/>
    </source>
</evidence>
<reference key="1">
    <citation type="journal article" date="2011" name="Stand. Genomic Sci.">
        <title>Complete genome sequence of the halophilic and highly halotolerant Chromohalobacter salexigens type strain (1H11(T)).</title>
        <authorList>
            <person name="Copeland A."/>
            <person name="O'Connor K."/>
            <person name="Lucas S."/>
            <person name="Lapidus A."/>
            <person name="Berry K.W."/>
            <person name="Detter J.C."/>
            <person name="Del Rio T.G."/>
            <person name="Hammon N."/>
            <person name="Dalin E."/>
            <person name="Tice H."/>
            <person name="Pitluck S."/>
            <person name="Bruce D."/>
            <person name="Goodwin L."/>
            <person name="Han C."/>
            <person name="Tapia R."/>
            <person name="Saunders E."/>
            <person name="Schmutz J."/>
            <person name="Brettin T."/>
            <person name="Larimer F."/>
            <person name="Land M."/>
            <person name="Hauser L."/>
            <person name="Vargas C."/>
            <person name="Nieto J.J."/>
            <person name="Kyrpides N.C."/>
            <person name="Ivanova N."/>
            <person name="Goker M."/>
            <person name="Klenk H.P."/>
            <person name="Csonka L.N."/>
            <person name="Woyke T."/>
        </authorList>
    </citation>
    <scope>NUCLEOTIDE SEQUENCE [LARGE SCALE GENOMIC DNA]</scope>
    <source>
        <strain>ATCC BAA-138 / DSM 3043 / CIP 106854 / NCIMB 13768 / 1H11</strain>
    </source>
</reference>
<feature type="chain" id="PRO_0000414800" description="23S rRNA (uracil(1939)-C(5))-methyltransferase RlmD">
    <location>
        <begin position="1"/>
        <end position="475"/>
    </location>
</feature>
<feature type="domain" description="TRAM" evidence="1">
    <location>
        <begin position="26"/>
        <end position="85"/>
    </location>
</feature>
<feature type="region of interest" description="Disordered" evidence="2">
    <location>
        <begin position="1"/>
        <end position="33"/>
    </location>
</feature>
<feature type="region of interest" description="Disordered" evidence="2">
    <location>
        <begin position="455"/>
        <end position="475"/>
    </location>
</feature>
<feature type="compositionally biased region" description="Basic residues" evidence="2">
    <location>
        <begin position="1"/>
        <end position="10"/>
    </location>
</feature>
<feature type="compositionally biased region" description="Basic and acidic residues" evidence="2">
    <location>
        <begin position="13"/>
        <end position="30"/>
    </location>
</feature>
<feature type="compositionally biased region" description="Basic and acidic residues" evidence="2">
    <location>
        <begin position="457"/>
        <end position="475"/>
    </location>
</feature>
<feature type="active site" description="Nucleophile" evidence="1">
    <location>
        <position position="414"/>
    </location>
</feature>
<feature type="binding site" evidence="1">
    <location>
        <position position="98"/>
    </location>
    <ligand>
        <name>[4Fe-4S] cluster</name>
        <dbReference type="ChEBI" id="CHEBI:49883"/>
    </ligand>
</feature>
<feature type="binding site" evidence="1">
    <location>
        <position position="104"/>
    </location>
    <ligand>
        <name>[4Fe-4S] cluster</name>
        <dbReference type="ChEBI" id="CHEBI:49883"/>
    </ligand>
</feature>
<feature type="binding site" evidence="1">
    <location>
        <position position="107"/>
    </location>
    <ligand>
        <name>[4Fe-4S] cluster</name>
        <dbReference type="ChEBI" id="CHEBI:49883"/>
    </ligand>
</feature>
<feature type="binding site" evidence="1">
    <location>
        <position position="183"/>
    </location>
    <ligand>
        <name>[4Fe-4S] cluster</name>
        <dbReference type="ChEBI" id="CHEBI:49883"/>
    </ligand>
</feature>
<feature type="binding site" evidence="1">
    <location>
        <position position="294"/>
    </location>
    <ligand>
        <name>S-adenosyl-L-methionine</name>
        <dbReference type="ChEBI" id="CHEBI:59789"/>
    </ligand>
</feature>
<feature type="binding site" evidence="1">
    <location>
        <position position="323"/>
    </location>
    <ligand>
        <name>S-adenosyl-L-methionine</name>
        <dbReference type="ChEBI" id="CHEBI:59789"/>
    </ligand>
</feature>
<feature type="binding site" evidence="1">
    <location>
        <position position="328"/>
    </location>
    <ligand>
        <name>S-adenosyl-L-methionine</name>
        <dbReference type="ChEBI" id="CHEBI:59789"/>
    </ligand>
</feature>
<feature type="binding site" evidence="1">
    <location>
        <position position="344"/>
    </location>
    <ligand>
        <name>S-adenosyl-L-methionine</name>
        <dbReference type="ChEBI" id="CHEBI:59789"/>
    </ligand>
</feature>
<feature type="binding site" evidence="1">
    <location>
        <position position="371"/>
    </location>
    <ligand>
        <name>S-adenosyl-L-methionine</name>
        <dbReference type="ChEBI" id="CHEBI:59789"/>
    </ligand>
</feature>
<feature type="binding site" evidence="1">
    <location>
        <position position="388"/>
    </location>
    <ligand>
        <name>S-adenosyl-L-methionine</name>
        <dbReference type="ChEBI" id="CHEBI:59789"/>
    </ligand>
</feature>
<proteinExistence type="inferred from homology"/>
<name>RLMD_CHRSD</name>
<accession>Q1QX18</accession>
<dbReference type="EC" id="2.1.1.190" evidence="1"/>
<dbReference type="EMBL" id="CP000285">
    <property type="protein sequence ID" value="ABE58990.1"/>
    <property type="molecule type" value="Genomic_DNA"/>
</dbReference>
<dbReference type="RefSeq" id="WP_011506936.1">
    <property type="nucleotide sequence ID" value="NC_007963.1"/>
</dbReference>
<dbReference type="SMR" id="Q1QX18"/>
<dbReference type="STRING" id="290398.Csal_1637"/>
<dbReference type="GeneID" id="95334368"/>
<dbReference type="KEGG" id="csa:Csal_1637"/>
<dbReference type="eggNOG" id="COG2265">
    <property type="taxonomic scope" value="Bacteria"/>
</dbReference>
<dbReference type="HOGENOM" id="CLU_014689_8_2_6"/>
<dbReference type="OrthoDB" id="9804590at2"/>
<dbReference type="Proteomes" id="UP000000239">
    <property type="component" value="Chromosome"/>
</dbReference>
<dbReference type="GO" id="GO:0051539">
    <property type="term" value="F:4 iron, 4 sulfur cluster binding"/>
    <property type="evidence" value="ECO:0007669"/>
    <property type="project" value="UniProtKB-KW"/>
</dbReference>
<dbReference type="GO" id="GO:0005506">
    <property type="term" value="F:iron ion binding"/>
    <property type="evidence" value="ECO:0007669"/>
    <property type="project" value="UniProtKB-UniRule"/>
</dbReference>
<dbReference type="GO" id="GO:0003723">
    <property type="term" value="F:RNA binding"/>
    <property type="evidence" value="ECO:0007669"/>
    <property type="project" value="InterPro"/>
</dbReference>
<dbReference type="GO" id="GO:0070041">
    <property type="term" value="F:rRNA (uridine-C5-)-methyltransferase activity"/>
    <property type="evidence" value="ECO:0007669"/>
    <property type="project" value="UniProtKB-UniRule"/>
</dbReference>
<dbReference type="GO" id="GO:0070475">
    <property type="term" value="P:rRNA base methylation"/>
    <property type="evidence" value="ECO:0007669"/>
    <property type="project" value="TreeGrafter"/>
</dbReference>
<dbReference type="CDD" id="cd02440">
    <property type="entry name" value="AdoMet_MTases"/>
    <property type="match status" value="1"/>
</dbReference>
<dbReference type="FunFam" id="2.40.50.140:FF:000097">
    <property type="entry name" value="23S rRNA (uracil(1939)-C(5))-methyltransferase RlmD"/>
    <property type="match status" value="1"/>
</dbReference>
<dbReference type="Gene3D" id="2.40.50.1070">
    <property type="match status" value="1"/>
</dbReference>
<dbReference type="Gene3D" id="2.40.50.140">
    <property type="entry name" value="Nucleic acid-binding proteins"/>
    <property type="match status" value="1"/>
</dbReference>
<dbReference type="Gene3D" id="3.40.50.150">
    <property type="entry name" value="Vaccinia Virus protein VP39"/>
    <property type="match status" value="1"/>
</dbReference>
<dbReference type="HAMAP" id="MF_01010">
    <property type="entry name" value="23SrRNA_methyltr_RlmD"/>
    <property type="match status" value="1"/>
</dbReference>
<dbReference type="InterPro" id="IPR001566">
    <property type="entry name" value="23S_rRNA_MeTrfase_RlmD"/>
</dbReference>
<dbReference type="InterPro" id="IPR012340">
    <property type="entry name" value="NA-bd_OB-fold"/>
</dbReference>
<dbReference type="InterPro" id="IPR029063">
    <property type="entry name" value="SAM-dependent_MTases_sf"/>
</dbReference>
<dbReference type="InterPro" id="IPR002792">
    <property type="entry name" value="TRAM_dom"/>
</dbReference>
<dbReference type="InterPro" id="IPR010280">
    <property type="entry name" value="U5_MeTrfase_fam"/>
</dbReference>
<dbReference type="PANTHER" id="PTHR11061:SF49">
    <property type="entry name" value="23S RRNA (URACIL(1939)-C(5))-METHYLTRANSFERASE RLMD"/>
    <property type="match status" value="1"/>
</dbReference>
<dbReference type="PANTHER" id="PTHR11061">
    <property type="entry name" value="RNA M5U METHYLTRANSFERASE"/>
    <property type="match status" value="1"/>
</dbReference>
<dbReference type="Pfam" id="PF01938">
    <property type="entry name" value="TRAM"/>
    <property type="match status" value="1"/>
</dbReference>
<dbReference type="Pfam" id="PF05958">
    <property type="entry name" value="tRNA_U5-meth_tr"/>
    <property type="match status" value="2"/>
</dbReference>
<dbReference type="SUPFAM" id="SSF50249">
    <property type="entry name" value="Nucleic acid-binding proteins"/>
    <property type="match status" value="1"/>
</dbReference>
<dbReference type="SUPFAM" id="SSF53335">
    <property type="entry name" value="S-adenosyl-L-methionine-dependent methyltransferases"/>
    <property type="match status" value="1"/>
</dbReference>
<dbReference type="PROSITE" id="PS51687">
    <property type="entry name" value="SAM_MT_RNA_M5U"/>
    <property type="match status" value="1"/>
</dbReference>
<dbReference type="PROSITE" id="PS50926">
    <property type="entry name" value="TRAM"/>
    <property type="match status" value="1"/>
</dbReference>
<gene>
    <name evidence="1" type="primary">rlmD</name>
    <name type="ordered locus">Csal_1637</name>
</gene>